<comment type="function">
    <text evidence="1">Converts 2-succinyl-6-hydroxy-2,4-cyclohexadiene-1-carboxylate (SHCHC) to 2-succinylbenzoate (OSB).</text>
</comment>
<comment type="catalytic activity">
    <reaction evidence="1">
        <text>(1R,6R)-6-hydroxy-2-succinyl-cyclohexa-2,4-diene-1-carboxylate = 2-succinylbenzoate + H2O</text>
        <dbReference type="Rhea" id="RHEA:10196"/>
        <dbReference type="ChEBI" id="CHEBI:15377"/>
        <dbReference type="ChEBI" id="CHEBI:18325"/>
        <dbReference type="ChEBI" id="CHEBI:58689"/>
        <dbReference type="EC" id="4.2.1.113"/>
    </reaction>
</comment>
<comment type="cofactor">
    <cofactor evidence="1">
        <name>a divalent metal cation</name>
        <dbReference type="ChEBI" id="CHEBI:60240"/>
    </cofactor>
</comment>
<comment type="pathway">
    <text evidence="1">Quinol/quinone metabolism; 1,4-dihydroxy-2-naphthoate biosynthesis; 1,4-dihydroxy-2-naphthoate from chorismate: step 4/7.</text>
</comment>
<comment type="pathway">
    <text evidence="1">Quinol/quinone metabolism; menaquinone biosynthesis.</text>
</comment>
<comment type="similarity">
    <text evidence="1">Belongs to the mandelate racemase/muconate lactonizing enzyme family. MenC type 1 subfamily.</text>
</comment>
<reference key="1">
    <citation type="journal article" date="2006" name="J. Bacteriol.">
        <title>Complete genome sequence of Yersinia pestis strains Antiqua and Nepal516: evidence of gene reduction in an emerging pathogen.</title>
        <authorList>
            <person name="Chain P.S.G."/>
            <person name="Hu P."/>
            <person name="Malfatti S.A."/>
            <person name="Radnedge L."/>
            <person name="Larimer F."/>
            <person name="Vergez L.M."/>
            <person name="Worsham P."/>
            <person name="Chu M.C."/>
            <person name="Andersen G.L."/>
        </authorList>
    </citation>
    <scope>NUCLEOTIDE SEQUENCE [LARGE SCALE GENOMIC DNA]</scope>
    <source>
        <strain>Antiqua</strain>
    </source>
</reference>
<evidence type="ECO:0000255" key="1">
    <source>
        <dbReference type="HAMAP-Rule" id="MF_00470"/>
    </source>
</evidence>
<proteinExistence type="inferred from homology"/>
<name>MENC_YERPA</name>
<gene>
    <name evidence="1" type="primary">menC</name>
    <name type="ordered locus">YPA_2016</name>
</gene>
<dbReference type="EC" id="4.2.1.113" evidence="1"/>
<dbReference type="EMBL" id="CP000308">
    <property type="protein sequence ID" value="ABG13982.1"/>
    <property type="molecule type" value="Genomic_DNA"/>
</dbReference>
<dbReference type="RefSeq" id="WP_002210244.1">
    <property type="nucleotide sequence ID" value="NZ_CP009906.1"/>
</dbReference>
<dbReference type="SMR" id="Q1C6E0"/>
<dbReference type="GeneID" id="57976163"/>
<dbReference type="KEGG" id="ypa:YPA_2016"/>
<dbReference type="UniPathway" id="UPA00079"/>
<dbReference type="UniPathway" id="UPA01057">
    <property type="reaction ID" value="UER00165"/>
</dbReference>
<dbReference type="Proteomes" id="UP000001971">
    <property type="component" value="Chromosome"/>
</dbReference>
<dbReference type="GO" id="GO:0000287">
    <property type="term" value="F:magnesium ion binding"/>
    <property type="evidence" value="ECO:0007669"/>
    <property type="project" value="UniProtKB-UniRule"/>
</dbReference>
<dbReference type="GO" id="GO:0043748">
    <property type="term" value="F:O-succinylbenzoate synthase activity"/>
    <property type="evidence" value="ECO:0007669"/>
    <property type="project" value="UniProtKB-EC"/>
</dbReference>
<dbReference type="GO" id="GO:0009234">
    <property type="term" value="P:menaquinone biosynthetic process"/>
    <property type="evidence" value="ECO:0007669"/>
    <property type="project" value="UniProtKB-UniRule"/>
</dbReference>
<dbReference type="CDD" id="cd03320">
    <property type="entry name" value="OSBS"/>
    <property type="match status" value="1"/>
</dbReference>
<dbReference type="Gene3D" id="3.20.20.120">
    <property type="entry name" value="Enolase-like C-terminal domain"/>
    <property type="match status" value="1"/>
</dbReference>
<dbReference type="Gene3D" id="3.30.390.10">
    <property type="entry name" value="Enolase-like, N-terminal domain"/>
    <property type="match status" value="1"/>
</dbReference>
<dbReference type="HAMAP" id="MF_00470">
    <property type="entry name" value="MenC_1"/>
    <property type="match status" value="1"/>
</dbReference>
<dbReference type="InterPro" id="IPR036849">
    <property type="entry name" value="Enolase-like_C_sf"/>
</dbReference>
<dbReference type="InterPro" id="IPR029017">
    <property type="entry name" value="Enolase-like_N"/>
</dbReference>
<dbReference type="InterPro" id="IPR029065">
    <property type="entry name" value="Enolase_C-like"/>
</dbReference>
<dbReference type="InterPro" id="IPR013342">
    <property type="entry name" value="Mandelate_racemase_C"/>
</dbReference>
<dbReference type="InterPro" id="IPR010196">
    <property type="entry name" value="OSB_synthase_MenC1"/>
</dbReference>
<dbReference type="InterPro" id="IPR041338">
    <property type="entry name" value="OSBS_N"/>
</dbReference>
<dbReference type="NCBIfam" id="TIGR01927">
    <property type="entry name" value="menC_gam_Gplu"/>
    <property type="match status" value="1"/>
</dbReference>
<dbReference type="NCBIfam" id="NF003473">
    <property type="entry name" value="PRK05105.1"/>
    <property type="match status" value="1"/>
</dbReference>
<dbReference type="PANTHER" id="PTHR48073:SF2">
    <property type="entry name" value="O-SUCCINYLBENZOATE SYNTHASE"/>
    <property type="match status" value="1"/>
</dbReference>
<dbReference type="PANTHER" id="PTHR48073">
    <property type="entry name" value="O-SUCCINYLBENZOATE SYNTHASE-RELATED"/>
    <property type="match status" value="1"/>
</dbReference>
<dbReference type="Pfam" id="PF21508">
    <property type="entry name" value="MenC_N"/>
    <property type="match status" value="1"/>
</dbReference>
<dbReference type="Pfam" id="PF13378">
    <property type="entry name" value="MR_MLE_C"/>
    <property type="match status" value="1"/>
</dbReference>
<dbReference type="SFLD" id="SFLDS00001">
    <property type="entry name" value="Enolase"/>
    <property type="match status" value="1"/>
</dbReference>
<dbReference type="SFLD" id="SFLDF00009">
    <property type="entry name" value="o-succinylbenzoate_synthase"/>
    <property type="match status" value="1"/>
</dbReference>
<dbReference type="SMART" id="SM00922">
    <property type="entry name" value="MR_MLE"/>
    <property type="match status" value="1"/>
</dbReference>
<dbReference type="SUPFAM" id="SSF51604">
    <property type="entry name" value="Enolase C-terminal domain-like"/>
    <property type="match status" value="1"/>
</dbReference>
<dbReference type="SUPFAM" id="SSF54826">
    <property type="entry name" value="Enolase N-terminal domain-like"/>
    <property type="match status" value="1"/>
</dbReference>
<feature type="chain" id="PRO_1000013817" description="o-succinylbenzoate synthase">
    <location>
        <begin position="1"/>
        <end position="323"/>
    </location>
</feature>
<feature type="active site" description="Proton donor" evidence="1">
    <location>
        <position position="134"/>
    </location>
</feature>
<feature type="active site" description="Proton acceptor" evidence="1">
    <location>
        <position position="236"/>
    </location>
</feature>
<feature type="binding site" evidence="1">
    <location>
        <position position="162"/>
    </location>
    <ligand>
        <name>Mg(2+)</name>
        <dbReference type="ChEBI" id="CHEBI:18420"/>
    </ligand>
</feature>
<feature type="binding site" evidence="1">
    <location>
        <position position="191"/>
    </location>
    <ligand>
        <name>Mg(2+)</name>
        <dbReference type="ChEBI" id="CHEBI:18420"/>
    </ligand>
</feature>
<feature type="binding site" evidence="1">
    <location>
        <position position="214"/>
    </location>
    <ligand>
        <name>Mg(2+)</name>
        <dbReference type="ChEBI" id="CHEBI:18420"/>
    </ligand>
</feature>
<protein>
    <recommendedName>
        <fullName evidence="1">o-succinylbenzoate synthase</fullName>
        <shortName evidence="1">OSB synthase</shortName>
        <shortName evidence="1">OSBS</shortName>
        <ecNumber evidence="1">4.2.1.113</ecNumber>
    </recommendedName>
    <alternativeName>
        <fullName evidence="1">4-(2'-carboxyphenyl)-4-oxybutyric acid synthase</fullName>
    </alternativeName>
    <alternativeName>
        <fullName evidence="1">o-succinylbenzoic acid synthase</fullName>
    </alternativeName>
</protein>
<organism>
    <name type="scientific">Yersinia pestis bv. Antiqua (strain Antiqua)</name>
    <dbReference type="NCBI Taxonomy" id="360102"/>
    <lineage>
        <taxon>Bacteria</taxon>
        <taxon>Pseudomonadati</taxon>
        <taxon>Pseudomonadota</taxon>
        <taxon>Gammaproteobacteria</taxon>
        <taxon>Enterobacterales</taxon>
        <taxon>Yersiniaceae</taxon>
        <taxon>Yersinia</taxon>
    </lineage>
</organism>
<keyword id="KW-0456">Lyase</keyword>
<keyword id="KW-0460">Magnesium</keyword>
<keyword id="KW-0474">Menaquinone biosynthesis</keyword>
<keyword id="KW-0479">Metal-binding</keyword>
<accession>Q1C6E0</accession>
<sequence>MRTATLYRYSVPMEAGVILRHQRLKSRDGLLVKLQQGELSGWGEIAPLPEFSQETLDQAQVAAECWLQHWVSGVESDDSVLPSVAFGLSCAQAELKQTLPLSADYRKAPLCTGDPDELFAVLQALPGEKVAKVKVGLYEAVRDGMIVNVLLEALPDLTLRLDANRSWSRAKADGFAKYVNPALRSRIAFLEEPCKTRAESREFAQDTGIAIAWDESVREADFQVEAEPGVAAIVIKPTLVGSLARCQQLVQQAHQAGLVAVISSSIESSLGLTQLARLAAWLTPVTVPGLDTLDLMQAQVVRPWPDSPLPLITTEQLGVVWHR</sequence>